<protein>
    <recommendedName>
        <fullName>Uncharacterized protein YhbF</fullName>
    </recommendedName>
</protein>
<accession>P39133</accession>
<accession>O31591</accession>
<reference key="1">
    <citation type="journal article" date="1996" name="Gene">
        <title>Cloning and characterization of the Bacillus subtilis prkA gene encoding a novel serine protein kinase.</title>
        <authorList>
            <person name="Fischer C."/>
            <person name="Geourjon C."/>
            <person name="Bourson C."/>
            <person name="Deutscher J."/>
        </authorList>
    </citation>
    <scope>NUCLEOTIDE SEQUENCE [GENOMIC DNA]</scope>
    <source>
        <strain>168</strain>
    </source>
</reference>
<reference key="2">
    <citation type="journal article" date="1997" name="Nature">
        <title>The complete genome sequence of the Gram-positive bacterium Bacillus subtilis.</title>
        <authorList>
            <person name="Kunst F."/>
            <person name="Ogasawara N."/>
            <person name="Moszer I."/>
            <person name="Albertini A.M."/>
            <person name="Alloni G."/>
            <person name="Azevedo V."/>
            <person name="Bertero M.G."/>
            <person name="Bessieres P."/>
            <person name="Bolotin A."/>
            <person name="Borchert S."/>
            <person name="Borriss R."/>
            <person name="Boursier L."/>
            <person name="Brans A."/>
            <person name="Braun M."/>
            <person name="Brignell S.C."/>
            <person name="Bron S."/>
            <person name="Brouillet S."/>
            <person name="Bruschi C.V."/>
            <person name="Caldwell B."/>
            <person name="Capuano V."/>
            <person name="Carter N.M."/>
            <person name="Choi S.-K."/>
            <person name="Codani J.-J."/>
            <person name="Connerton I.F."/>
            <person name="Cummings N.J."/>
            <person name="Daniel R.A."/>
            <person name="Denizot F."/>
            <person name="Devine K.M."/>
            <person name="Duesterhoeft A."/>
            <person name="Ehrlich S.D."/>
            <person name="Emmerson P.T."/>
            <person name="Entian K.-D."/>
            <person name="Errington J."/>
            <person name="Fabret C."/>
            <person name="Ferrari E."/>
            <person name="Foulger D."/>
            <person name="Fritz C."/>
            <person name="Fujita M."/>
            <person name="Fujita Y."/>
            <person name="Fuma S."/>
            <person name="Galizzi A."/>
            <person name="Galleron N."/>
            <person name="Ghim S.-Y."/>
            <person name="Glaser P."/>
            <person name="Goffeau A."/>
            <person name="Golightly E.J."/>
            <person name="Grandi G."/>
            <person name="Guiseppi G."/>
            <person name="Guy B.J."/>
            <person name="Haga K."/>
            <person name="Haiech J."/>
            <person name="Harwood C.R."/>
            <person name="Henaut A."/>
            <person name="Hilbert H."/>
            <person name="Holsappel S."/>
            <person name="Hosono S."/>
            <person name="Hullo M.-F."/>
            <person name="Itaya M."/>
            <person name="Jones L.-M."/>
            <person name="Joris B."/>
            <person name="Karamata D."/>
            <person name="Kasahara Y."/>
            <person name="Klaerr-Blanchard M."/>
            <person name="Klein C."/>
            <person name="Kobayashi Y."/>
            <person name="Koetter P."/>
            <person name="Koningstein G."/>
            <person name="Krogh S."/>
            <person name="Kumano M."/>
            <person name="Kurita K."/>
            <person name="Lapidus A."/>
            <person name="Lardinois S."/>
            <person name="Lauber J."/>
            <person name="Lazarevic V."/>
            <person name="Lee S.-M."/>
            <person name="Levine A."/>
            <person name="Liu H."/>
            <person name="Masuda S."/>
            <person name="Mauel C."/>
            <person name="Medigue C."/>
            <person name="Medina N."/>
            <person name="Mellado R.P."/>
            <person name="Mizuno M."/>
            <person name="Moestl D."/>
            <person name="Nakai S."/>
            <person name="Noback M."/>
            <person name="Noone D."/>
            <person name="O'Reilly M."/>
            <person name="Ogawa K."/>
            <person name="Ogiwara A."/>
            <person name="Oudega B."/>
            <person name="Park S.-H."/>
            <person name="Parro V."/>
            <person name="Pohl T.M."/>
            <person name="Portetelle D."/>
            <person name="Porwollik S."/>
            <person name="Prescott A.M."/>
            <person name="Presecan E."/>
            <person name="Pujic P."/>
            <person name="Purnelle B."/>
            <person name="Rapoport G."/>
            <person name="Rey M."/>
            <person name="Reynolds S."/>
            <person name="Rieger M."/>
            <person name="Rivolta C."/>
            <person name="Rocha E."/>
            <person name="Roche B."/>
            <person name="Rose M."/>
            <person name="Sadaie Y."/>
            <person name="Sato T."/>
            <person name="Scanlan E."/>
            <person name="Schleich S."/>
            <person name="Schroeter R."/>
            <person name="Scoffone F."/>
            <person name="Sekiguchi J."/>
            <person name="Sekowska A."/>
            <person name="Seror S.J."/>
            <person name="Serror P."/>
            <person name="Shin B.-S."/>
            <person name="Soldo B."/>
            <person name="Sorokin A."/>
            <person name="Tacconi E."/>
            <person name="Takagi T."/>
            <person name="Takahashi H."/>
            <person name="Takemaru K."/>
            <person name="Takeuchi M."/>
            <person name="Tamakoshi A."/>
            <person name="Tanaka T."/>
            <person name="Terpstra P."/>
            <person name="Tognoni A."/>
            <person name="Tosato V."/>
            <person name="Uchiyama S."/>
            <person name="Vandenbol M."/>
            <person name="Vannier F."/>
            <person name="Vassarotti A."/>
            <person name="Viari A."/>
            <person name="Wambutt R."/>
            <person name="Wedler E."/>
            <person name="Wedler H."/>
            <person name="Weitzenegger T."/>
            <person name="Winters P."/>
            <person name="Wipat A."/>
            <person name="Yamamoto H."/>
            <person name="Yamane K."/>
            <person name="Yasumoto K."/>
            <person name="Yata K."/>
            <person name="Yoshida K."/>
            <person name="Yoshikawa H.-F."/>
            <person name="Zumstein E."/>
            <person name="Yoshikawa H."/>
            <person name="Danchin A."/>
        </authorList>
    </citation>
    <scope>NUCLEOTIDE SEQUENCE [LARGE SCALE GENOMIC DNA]</scope>
    <source>
        <strain>168</strain>
    </source>
</reference>
<reference key="3">
    <citation type="journal article" date="2009" name="Microbiology">
        <title>From a consortium sequence to a unified sequence: the Bacillus subtilis 168 reference genome a decade later.</title>
        <authorList>
            <person name="Barbe V."/>
            <person name="Cruveiller S."/>
            <person name="Kunst F."/>
            <person name="Lenoble P."/>
            <person name="Meurice G."/>
            <person name="Sekowska A."/>
            <person name="Vallenet D."/>
            <person name="Wang T."/>
            <person name="Moszer I."/>
            <person name="Medigue C."/>
            <person name="Danchin A."/>
        </authorList>
    </citation>
    <scope>SEQUENCE REVISION TO 153</scope>
</reference>
<reference key="4">
    <citation type="submission" date="1997-03" db="EMBL/GenBank/DDBJ databases">
        <authorList>
            <person name="Cummings N.J."/>
            <person name="Ruiz-Teran F."/>
            <person name="Connerton I.F."/>
        </authorList>
    </citation>
    <scope>NUCLEOTIDE SEQUENCE [GENOMIC DNA] OF 1-198</scope>
    <source>
        <strain>168</strain>
    </source>
</reference>
<reference key="5">
    <citation type="submission" date="1996-05" db="EMBL/GenBank/DDBJ databases">
        <authorList>
            <person name="Schroeder K."/>
            <person name="Marahiel M.A."/>
        </authorList>
    </citation>
    <scope>NUCLEOTIDE SEQUENCE [GENOMIC DNA] OF 1-70</scope>
    <source>
        <strain>168 / JH642</strain>
    </source>
</reference>
<evidence type="ECO:0000305" key="1"/>
<keyword id="KW-1185">Reference proteome</keyword>
<organism>
    <name type="scientific">Bacillus subtilis (strain 168)</name>
    <dbReference type="NCBI Taxonomy" id="224308"/>
    <lineage>
        <taxon>Bacteria</taxon>
        <taxon>Bacillati</taxon>
        <taxon>Bacillota</taxon>
        <taxon>Bacilli</taxon>
        <taxon>Bacillales</taxon>
        <taxon>Bacillaceae</taxon>
        <taxon>Bacillus</taxon>
    </lineage>
</organism>
<proteinExistence type="predicted"/>
<sequence length="235" mass="25070">METTKLGNLKLYGAGHAAGGAYHNVSIKGEGIVGEGLSAVGCRIYGTGLFLGKAETERLRVLGESECKGDLTAGKINIYGTMKVSGSLQFDRFNLKGQTEIGGNMTGESCDVKGKLSVIGDCETEMFHVTGCVDVSGLLNSGEIKLGLSHDISHVQEIGGTTITVKRRASFFSRKKGKLIADVIEGDRVYLENTEAAVVRGKEVIIGPGCSIGTIEYEYKCECDPHSQIKEKTKL</sequence>
<name>YHBF_BACSU</name>
<dbReference type="EMBL" id="X79388">
    <property type="protein sequence ID" value="CAA55932.1"/>
    <property type="molecule type" value="Genomic_DNA"/>
</dbReference>
<dbReference type="EMBL" id="AL009126">
    <property type="protein sequence ID" value="CAB12724.2"/>
    <property type="molecule type" value="Genomic_DNA"/>
</dbReference>
<dbReference type="EMBL" id="Z93102">
    <property type="protein sequence ID" value="CAB07519.1"/>
    <property type="molecule type" value="Genomic_DNA"/>
</dbReference>
<dbReference type="EMBL" id="U58864">
    <property type="protein sequence ID" value="AAB02740.1"/>
    <property type="molecule type" value="Genomic_DNA"/>
</dbReference>
<dbReference type="PIR" id="JC4603">
    <property type="entry name" value="JC4603"/>
</dbReference>
<dbReference type="RefSeq" id="NP_388777.2">
    <property type="nucleotide sequence ID" value="NC_000964.3"/>
</dbReference>
<dbReference type="RefSeq" id="WP_003245825.1">
    <property type="nucleotide sequence ID" value="NZ_OZ025638.1"/>
</dbReference>
<dbReference type="SMR" id="P39133"/>
<dbReference type="FunCoup" id="P39133">
    <property type="interactions" value="50"/>
</dbReference>
<dbReference type="STRING" id="224308.BSU08960"/>
<dbReference type="PaxDb" id="224308-BSU08960"/>
<dbReference type="EnsemblBacteria" id="CAB12724">
    <property type="protein sequence ID" value="CAB12724"/>
    <property type="gene ID" value="BSU_08960"/>
</dbReference>
<dbReference type="GeneID" id="936219"/>
<dbReference type="KEGG" id="bsu:BSU08960"/>
<dbReference type="PATRIC" id="fig|224308.179.peg.967"/>
<dbReference type="eggNOG" id="COG1664">
    <property type="taxonomic scope" value="Bacteria"/>
</dbReference>
<dbReference type="InParanoid" id="P39133"/>
<dbReference type="OrthoDB" id="1730007at2"/>
<dbReference type="PhylomeDB" id="P39133"/>
<dbReference type="BioCyc" id="BSUB:BSU08960-MONOMER"/>
<dbReference type="Proteomes" id="UP000001570">
    <property type="component" value="Chromosome"/>
</dbReference>
<feature type="chain" id="PRO_0000049555" description="Uncharacterized protein YhbF">
    <location>
        <begin position="1"/>
        <end position="235"/>
    </location>
</feature>
<feature type="sequence conflict" description="In Ref. 1; CAA55932, 3; CAB07519 and 4; AAB02740." evidence="1" ref="1 3 4">
    <original>G</original>
    <variation>A</variation>
    <location>
        <position position="41"/>
    </location>
</feature>
<gene>
    <name type="primary">yhbF</name>
    <name type="synonym">yzdB</name>
    <name type="ordered locus">BSU08960</name>
</gene>